<evidence type="ECO:0000255" key="1">
    <source>
        <dbReference type="HAMAP-Rule" id="MF_00188"/>
    </source>
</evidence>
<organism>
    <name type="scientific">Actinobacillus pleuropneumoniae serotype 5b (strain L20)</name>
    <dbReference type="NCBI Taxonomy" id="416269"/>
    <lineage>
        <taxon>Bacteria</taxon>
        <taxon>Pseudomonadati</taxon>
        <taxon>Pseudomonadota</taxon>
        <taxon>Gammaproteobacteria</taxon>
        <taxon>Pasteurellales</taxon>
        <taxon>Pasteurellaceae</taxon>
        <taxon>Actinobacillus</taxon>
    </lineage>
</organism>
<proteinExistence type="inferred from homology"/>
<reference key="1">
    <citation type="journal article" date="2008" name="J. Bacteriol.">
        <title>The complete genome sequence of Actinobacillus pleuropneumoniae L20 (serotype 5b).</title>
        <authorList>
            <person name="Foote S.J."/>
            <person name="Bosse J.T."/>
            <person name="Bouevitch A.B."/>
            <person name="Langford P.R."/>
            <person name="Young N.M."/>
            <person name="Nash J.H.E."/>
        </authorList>
    </citation>
    <scope>NUCLEOTIDE SEQUENCE [LARGE SCALE GENOMIC DNA]</scope>
    <source>
        <strain>L20</strain>
    </source>
</reference>
<accession>A3N147</accession>
<keyword id="KW-0997">Cell inner membrane</keyword>
<keyword id="KW-1003">Cell membrane</keyword>
<keyword id="KW-0378">Hydrolase</keyword>
<keyword id="KW-0472">Membrane</keyword>
<keyword id="KW-0479">Metal-binding</keyword>
<keyword id="KW-0482">Metalloprotease</keyword>
<keyword id="KW-0645">Protease</keyword>
<keyword id="KW-1185">Reference proteome</keyword>
<keyword id="KW-0812">Transmembrane</keyword>
<keyword id="KW-1133">Transmembrane helix</keyword>
<keyword id="KW-0862">Zinc</keyword>
<sequence>MAKRIVLFLLTNLAITFVLGIVLNIIFQVTGIQGGSTGGILVMSLVFGFAGSLISLFMSKSMALRSVGAEVIQQPRNHAEQWLFDTVQRQSQQANIPMPDIAIYHSADVNAFATGATKNNSLVAVSTGLLDNMTEDEAEAVVAHEIAHIANGDMVTMTLLQGVLNTFVIFLSRIISTAASSGKDENGNATQNTLVFWIVDIALQMIFGVIATMIAMWFSRYREYRADAGSAQLVGKEKMIAALQRLQHVHEPQEMQGSLAAFMINGARSKELFMSHPPLEKRIEALRNL</sequence>
<name>HTPX_ACTP2</name>
<dbReference type="EC" id="3.4.24.-" evidence="1"/>
<dbReference type="EMBL" id="CP000569">
    <property type="protein sequence ID" value="ABN74133.1"/>
    <property type="molecule type" value="Genomic_DNA"/>
</dbReference>
<dbReference type="RefSeq" id="WP_005604779.1">
    <property type="nucleotide sequence ID" value="NC_009053.1"/>
</dbReference>
<dbReference type="SMR" id="A3N147"/>
<dbReference type="STRING" id="416269.APL_1039"/>
<dbReference type="MEROPS" id="M48.002"/>
<dbReference type="EnsemblBacteria" id="ABN74133">
    <property type="protein sequence ID" value="ABN74133"/>
    <property type="gene ID" value="APL_1039"/>
</dbReference>
<dbReference type="GeneID" id="48599266"/>
<dbReference type="KEGG" id="apl:APL_1039"/>
<dbReference type="eggNOG" id="COG0501">
    <property type="taxonomic scope" value="Bacteria"/>
</dbReference>
<dbReference type="HOGENOM" id="CLU_042266_1_0_6"/>
<dbReference type="Proteomes" id="UP000001432">
    <property type="component" value="Chromosome"/>
</dbReference>
<dbReference type="GO" id="GO:0005886">
    <property type="term" value="C:plasma membrane"/>
    <property type="evidence" value="ECO:0007669"/>
    <property type="project" value="UniProtKB-SubCell"/>
</dbReference>
<dbReference type="GO" id="GO:0004222">
    <property type="term" value="F:metalloendopeptidase activity"/>
    <property type="evidence" value="ECO:0007669"/>
    <property type="project" value="UniProtKB-UniRule"/>
</dbReference>
<dbReference type="GO" id="GO:0008270">
    <property type="term" value="F:zinc ion binding"/>
    <property type="evidence" value="ECO:0007669"/>
    <property type="project" value="UniProtKB-UniRule"/>
</dbReference>
<dbReference type="GO" id="GO:0006508">
    <property type="term" value="P:proteolysis"/>
    <property type="evidence" value="ECO:0007669"/>
    <property type="project" value="UniProtKB-KW"/>
</dbReference>
<dbReference type="CDD" id="cd07335">
    <property type="entry name" value="M48B_HtpX_like"/>
    <property type="match status" value="1"/>
</dbReference>
<dbReference type="FunFam" id="3.30.2010.10:FF:000001">
    <property type="entry name" value="Protease HtpX"/>
    <property type="match status" value="1"/>
</dbReference>
<dbReference type="Gene3D" id="3.30.2010.10">
    <property type="entry name" value="Metalloproteases ('zincins'), catalytic domain"/>
    <property type="match status" value="1"/>
</dbReference>
<dbReference type="HAMAP" id="MF_00188">
    <property type="entry name" value="Pept_M48_protease_HtpX"/>
    <property type="match status" value="1"/>
</dbReference>
<dbReference type="InterPro" id="IPR050083">
    <property type="entry name" value="HtpX_protease"/>
</dbReference>
<dbReference type="InterPro" id="IPR022919">
    <property type="entry name" value="Pept_M48_protease_HtpX"/>
</dbReference>
<dbReference type="InterPro" id="IPR001915">
    <property type="entry name" value="Peptidase_M48"/>
</dbReference>
<dbReference type="NCBIfam" id="NF003965">
    <property type="entry name" value="PRK05457.1"/>
    <property type="match status" value="1"/>
</dbReference>
<dbReference type="PANTHER" id="PTHR43221">
    <property type="entry name" value="PROTEASE HTPX"/>
    <property type="match status" value="1"/>
</dbReference>
<dbReference type="PANTHER" id="PTHR43221:SF1">
    <property type="entry name" value="PROTEASE HTPX"/>
    <property type="match status" value="1"/>
</dbReference>
<dbReference type="Pfam" id="PF01435">
    <property type="entry name" value="Peptidase_M48"/>
    <property type="match status" value="1"/>
</dbReference>
<gene>
    <name evidence="1" type="primary">htpX</name>
    <name type="ordered locus">APL_1039</name>
</gene>
<feature type="chain" id="PRO_1000020837" description="Protease HtpX">
    <location>
        <begin position="1"/>
        <end position="289"/>
    </location>
</feature>
<feature type="transmembrane region" description="Helical" evidence="1">
    <location>
        <begin position="7"/>
        <end position="27"/>
    </location>
</feature>
<feature type="transmembrane region" description="Helical" evidence="1">
    <location>
        <begin position="38"/>
        <end position="58"/>
    </location>
</feature>
<feature type="transmembrane region" description="Helical" evidence="1">
    <location>
        <begin position="155"/>
        <end position="175"/>
    </location>
</feature>
<feature type="transmembrane region" description="Helical" evidence="1">
    <location>
        <begin position="194"/>
        <end position="214"/>
    </location>
</feature>
<feature type="active site" evidence="1">
    <location>
        <position position="145"/>
    </location>
</feature>
<feature type="binding site" evidence="1">
    <location>
        <position position="144"/>
    </location>
    <ligand>
        <name>Zn(2+)</name>
        <dbReference type="ChEBI" id="CHEBI:29105"/>
        <note>catalytic</note>
    </ligand>
</feature>
<feature type="binding site" evidence="1">
    <location>
        <position position="148"/>
    </location>
    <ligand>
        <name>Zn(2+)</name>
        <dbReference type="ChEBI" id="CHEBI:29105"/>
        <note>catalytic</note>
    </ligand>
</feature>
<feature type="binding site" evidence="1">
    <location>
        <position position="223"/>
    </location>
    <ligand>
        <name>Zn(2+)</name>
        <dbReference type="ChEBI" id="CHEBI:29105"/>
        <note>catalytic</note>
    </ligand>
</feature>
<protein>
    <recommendedName>
        <fullName evidence="1">Protease HtpX</fullName>
        <ecNumber evidence="1">3.4.24.-</ecNumber>
    </recommendedName>
    <alternativeName>
        <fullName evidence="1">Heat shock protein HtpX</fullName>
    </alternativeName>
</protein>
<comment type="cofactor">
    <cofactor evidence="1">
        <name>Zn(2+)</name>
        <dbReference type="ChEBI" id="CHEBI:29105"/>
    </cofactor>
    <text evidence="1">Binds 1 zinc ion per subunit.</text>
</comment>
<comment type="subcellular location">
    <subcellularLocation>
        <location evidence="1">Cell inner membrane</location>
        <topology evidence="1">Multi-pass membrane protein</topology>
    </subcellularLocation>
</comment>
<comment type="similarity">
    <text evidence="1">Belongs to the peptidase M48B family.</text>
</comment>